<reference key="1">
    <citation type="submission" date="2006-06" db="EMBL/GenBank/DDBJ databases">
        <title>Complete sequence of chromosome of Mycobacterium sp. MCS.</title>
        <authorList>
            <consortium name="US DOE Joint Genome Institute"/>
            <person name="Copeland A."/>
            <person name="Lucas S."/>
            <person name="Lapidus A."/>
            <person name="Barry K."/>
            <person name="Detter J.C."/>
            <person name="Glavina del Rio T."/>
            <person name="Hammon N."/>
            <person name="Israni S."/>
            <person name="Dalin E."/>
            <person name="Tice H."/>
            <person name="Pitluck S."/>
            <person name="Martinez M."/>
            <person name="Schmutz J."/>
            <person name="Larimer F."/>
            <person name="Land M."/>
            <person name="Hauser L."/>
            <person name="Kyrpides N."/>
            <person name="Kim E."/>
            <person name="Miller C.D."/>
            <person name="Hughes J.E."/>
            <person name="Anderson A.J."/>
            <person name="Sims R.C."/>
            <person name="Richardson P."/>
        </authorList>
    </citation>
    <scope>NUCLEOTIDE SEQUENCE [LARGE SCALE GENOMIC DNA]</scope>
    <source>
        <strain>MCS</strain>
    </source>
</reference>
<protein>
    <recommendedName>
        <fullName>Phenyloxazoline synthase MbtB</fullName>
        <ecNumber>6.3.2.-</ecNumber>
    </recommendedName>
    <alternativeName>
        <fullName>Mycobactin synthetase protein B</fullName>
    </alternativeName>
</protein>
<organism>
    <name type="scientific">Mycobacterium sp. (strain MCS)</name>
    <dbReference type="NCBI Taxonomy" id="164756"/>
    <lineage>
        <taxon>Bacteria</taxon>
        <taxon>Bacillati</taxon>
        <taxon>Actinomycetota</taxon>
        <taxon>Actinomycetes</taxon>
        <taxon>Mycobacteriales</taxon>
        <taxon>Mycobacteriaceae</taxon>
        <taxon>Mycobacterium</taxon>
    </lineage>
</organism>
<feature type="chain" id="PRO_0000261308" description="Phenyloxazoline synthase MbtB">
    <location>
        <begin position="1"/>
        <end position="1167"/>
    </location>
</feature>
<feature type="domain" description="Carrier 1" evidence="2">
    <location>
        <begin position="2"/>
        <end position="78"/>
    </location>
</feature>
<feature type="domain" description="Carrier 2" evidence="2">
    <location>
        <begin position="1054"/>
        <end position="1130"/>
    </location>
</feature>
<feature type="region of interest" description="Disordered" evidence="3">
    <location>
        <begin position="78"/>
        <end position="100"/>
    </location>
</feature>
<feature type="region of interest" description="Condensation/cyclization">
    <location>
        <begin position="98"/>
        <end position="390"/>
    </location>
</feature>
<feature type="region of interest" description="Adenylation">
    <location>
        <begin position="575"/>
        <end position="967"/>
    </location>
</feature>
<feature type="modified residue" description="O-(pantetheine 4'-phosphoryl)serine" evidence="2">
    <location>
        <position position="39"/>
    </location>
</feature>
<feature type="modified residue" description="O-(pantetheine 4'-phosphoryl)serine" evidence="2">
    <location>
        <position position="1089"/>
    </location>
</feature>
<gene>
    <name type="primary">mbtB</name>
    <name type="ordered locus">Mmcs_3470</name>
</gene>
<name>MBTB_MYCSS</name>
<keyword id="KW-0436">Ligase</keyword>
<keyword id="KW-0511">Multifunctional enzyme</keyword>
<keyword id="KW-0596">Phosphopantetheine</keyword>
<keyword id="KW-0597">Phosphoprotein</keyword>
<keyword id="KW-0677">Repeat</keyword>
<comment type="function">
    <text evidence="1">Involved in the initial steps of the mycobactin biosynthetic pathway. Putatively couples activated salicylic acid with serine or threonine and cyclizes this precursor to the hydroxyphenyloxazoline ring system present in this class of siderophores (By similarity).</text>
</comment>
<comment type="cofactor">
    <cofactor evidence="1">
        <name>pantetheine 4'-phosphate</name>
        <dbReference type="ChEBI" id="CHEBI:47942"/>
    </cofactor>
    <text evidence="1">Binds 2 phosphopantetheines covalently.</text>
</comment>
<comment type="pathway">
    <text>Siderophore biosynthesis; mycobactin biosynthesis.</text>
</comment>
<comment type="domain">
    <text evidence="1">Modular protein that contains an aryl carrier protein (ArCP) domain which bears a phosphopantetheinyl arm to attach the activated salicylic acid, a condensation/cyclization domain involved in the formation of the oxazoline ring, an adenylation domain which activates the serine or threonine residue into an aminoacyl-AMP ester, and a peptidyl carrier protein (PCP) domain which bears a phosphopantetheinyl arm to attach the activated serine or threonine.</text>
</comment>
<comment type="PTM">
    <text evidence="1">4'-phosphopantetheine is transferred from CoA to a specific serine in each of the two carrier protein domains, leading to their activation from apo to holo forms.</text>
</comment>
<comment type="similarity">
    <text evidence="4">Belongs to the ATP-dependent AMP-binding enzyme family. MbtB subfamily.</text>
</comment>
<accession>Q1B6A7</accession>
<evidence type="ECO:0000250" key="1"/>
<evidence type="ECO:0000255" key="2">
    <source>
        <dbReference type="PROSITE-ProRule" id="PRU00258"/>
    </source>
</evidence>
<evidence type="ECO:0000256" key="3">
    <source>
        <dbReference type="SAM" id="MobiDB-lite"/>
    </source>
</evidence>
<evidence type="ECO:0000305" key="4"/>
<dbReference type="EC" id="6.3.2.-"/>
<dbReference type="EMBL" id="CP000384">
    <property type="protein sequence ID" value="ABG09577.1"/>
    <property type="molecule type" value="Genomic_DNA"/>
</dbReference>
<dbReference type="SMR" id="Q1B6A7"/>
<dbReference type="KEGG" id="mmc:Mmcs_3470"/>
<dbReference type="HOGENOM" id="CLU_000022_2_4_11"/>
<dbReference type="BioCyc" id="MSP164756:G1G6O-3540-MONOMER"/>
<dbReference type="UniPathway" id="UPA00011"/>
<dbReference type="GO" id="GO:0005737">
    <property type="term" value="C:cytoplasm"/>
    <property type="evidence" value="ECO:0007669"/>
    <property type="project" value="TreeGrafter"/>
</dbReference>
<dbReference type="GO" id="GO:0016874">
    <property type="term" value="F:ligase activity"/>
    <property type="evidence" value="ECO:0007669"/>
    <property type="project" value="UniProtKB-KW"/>
</dbReference>
<dbReference type="GO" id="GO:0031177">
    <property type="term" value="F:phosphopantetheine binding"/>
    <property type="evidence" value="ECO:0007669"/>
    <property type="project" value="InterPro"/>
</dbReference>
<dbReference type="GO" id="GO:0043041">
    <property type="term" value="P:amino acid activation for nonribosomal peptide biosynthetic process"/>
    <property type="evidence" value="ECO:0007669"/>
    <property type="project" value="TreeGrafter"/>
</dbReference>
<dbReference type="GO" id="GO:0008610">
    <property type="term" value="P:lipid biosynthetic process"/>
    <property type="evidence" value="ECO:0007669"/>
    <property type="project" value="UniProtKB-ARBA"/>
</dbReference>
<dbReference type="GO" id="GO:0044550">
    <property type="term" value="P:secondary metabolite biosynthetic process"/>
    <property type="evidence" value="ECO:0007669"/>
    <property type="project" value="TreeGrafter"/>
</dbReference>
<dbReference type="CDD" id="cd19535">
    <property type="entry name" value="Cyc_NRPS"/>
    <property type="match status" value="1"/>
</dbReference>
<dbReference type="FunFam" id="1.10.1200.10:FF:000016">
    <property type="entry name" value="Non-ribosomal peptide synthase"/>
    <property type="match status" value="1"/>
</dbReference>
<dbReference type="FunFam" id="3.30.559.10:FF:000023">
    <property type="entry name" value="Non-ribosomal peptide synthetase"/>
    <property type="match status" value="1"/>
</dbReference>
<dbReference type="FunFam" id="3.40.50.12780:FF:000012">
    <property type="entry name" value="Non-ribosomal peptide synthetase"/>
    <property type="match status" value="1"/>
</dbReference>
<dbReference type="FunFam" id="3.30.559.30:FF:000006">
    <property type="entry name" value="Yersiniabactin polyketide/non-ribosomal peptide synthetase"/>
    <property type="match status" value="1"/>
</dbReference>
<dbReference type="Gene3D" id="3.30.300.30">
    <property type="match status" value="1"/>
</dbReference>
<dbReference type="Gene3D" id="1.10.1200.10">
    <property type="entry name" value="ACP-like"/>
    <property type="match status" value="2"/>
</dbReference>
<dbReference type="Gene3D" id="3.30.559.10">
    <property type="entry name" value="Chloramphenicol acetyltransferase-like domain"/>
    <property type="match status" value="1"/>
</dbReference>
<dbReference type="Gene3D" id="3.40.50.12780">
    <property type="entry name" value="N-terminal domain of ligase-like"/>
    <property type="match status" value="1"/>
</dbReference>
<dbReference type="Gene3D" id="3.30.559.30">
    <property type="entry name" value="Nonribosomal peptide synthetase, condensation domain"/>
    <property type="match status" value="1"/>
</dbReference>
<dbReference type="InterPro" id="IPR010071">
    <property type="entry name" value="AA_adenyl_dom"/>
</dbReference>
<dbReference type="InterPro" id="IPR036736">
    <property type="entry name" value="ACP-like_sf"/>
</dbReference>
<dbReference type="InterPro" id="IPR045851">
    <property type="entry name" value="AMP-bd_C_sf"/>
</dbReference>
<dbReference type="InterPro" id="IPR020845">
    <property type="entry name" value="AMP-binding_CS"/>
</dbReference>
<dbReference type="InterPro" id="IPR000873">
    <property type="entry name" value="AMP-dep_synth/lig_dom"/>
</dbReference>
<dbReference type="InterPro" id="IPR042099">
    <property type="entry name" value="ANL_N_sf"/>
</dbReference>
<dbReference type="InterPro" id="IPR023213">
    <property type="entry name" value="CAT-like_dom_sf"/>
</dbReference>
<dbReference type="InterPro" id="IPR001242">
    <property type="entry name" value="Condensatn"/>
</dbReference>
<dbReference type="InterPro" id="IPR020806">
    <property type="entry name" value="PKS_PP-bd"/>
</dbReference>
<dbReference type="InterPro" id="IPR009081">
    <property type="entry name" value="PP-bd_ACP"/>
</dbReference>
<dbReference type="InterPro" id="IPR006162">
    <property type="entry name" value="Ppantetheine_attach_site"/>
</dbReference>
<dbReference type="NCBIfam" id="TIGR01733">
    <property type="entry name" value="AA-adenyl-dom"/>
    <property type="match status" value="1"/>
</dbReference>
<dbReference type="PANTHER" id="PTHR45527:SF1">
    <property type="entry name" value="FATTY ACID SYNTHASE"/>
    <property type="match status" value="1"/>
</dbReference>
<dbReference type="PANTHER" id="PTHR45527">
    <property type="entry name" value="NONRIBOSOMAL PEPTIDE SYNTHETASE"/>
    <property type="match status" value="1"/>
</dbReference>
<dbReference type="Pfam" id="PF00501">
    <property type="entry name" value="AMP-binding"/>
    <property type="match status" value="1"/>
</dbReference>
<dbReference type="Pfam" id="PF00668">
    <property type="entry name" value="Condensation"/>
    <property type="match status" value="1"/>
</dbReference>
<dbReference type="Pfam" id="PF00550">
    <property type="entry name" value="PP-binding"/>
    <property type="match status" value="2"/>
</dbReference>
<dbReference type="SMART" id="SM00823">
    <property type="entry name" value="PKS_PP"/>
    <property type="match status" value="2"/>
</dbReference>
<dbReference type="SUPFAM" id="SSF56801">
    <property type="entry name" value="Acetyl-CoA synthetase-like"/>
    <property type="match status" value="1"/>
</dbReference>
<dbReference type="SUPFAM" id="SSF47336">
    <property type="entry name" value="ACP-like"/>
    <property type="match status" value="2"/>
</dbReference>
<dbReference type="SUPFAM" id="SSF52777">
    <property type="entry name" value="CoA-dependent acyltransferases"/>
    <property type="match status" value="2"/>
</dbReference>
<dbReference type="PROSITE" id="PS00455">
    <property type="entry name" value="AMP_BINDING"/>
    <property type="match status" value="1"/>
</dbReference>
<dbReference type="PROSITE" id="PS50075">
    <property type="entry name" value="CARRIER"/>
    <property type="match status" value="2"/>
</dbReference>
<dbReference type="PROSITE" id="PS00012">
    <property type="entry name" value="PHOSPHOPANTETHEINE"/>
    <property type="match status" value="1"/>
</dbReference>
<proteinExistence type="inferred from homology"/>
<sequence length="1167" mass="125554">MEAVVTSSQTVRAEVAELLGIEESALDPDADLIASGLDSIRMMSLSGRWRKQGIDVRFAAMAANPTVAAWTRLVGERTAESPGAATQSGDTAASAGDPDAPFPLAPIQHALWVGRNELTELGGVAAHLYVEFDGAGVDPERLRTAAAALAARHPMLRVDILGDGMQRISDRDLPVKVTDLRHLDVADAEQQLEVIRHAKSHQLLEGEVLELALTLLPDGRTRLHVDLDMQAADAVSYRNFMADLAALYRGAQLPELQYTYRQYRSAFTATPAPTVDEDRRWWTERIPDLPEPPALPLVPRAEQRDPRRGTRRWHFLDTDIRDRLFAAARARGITPAMAFAASYAGTLARWSTSRHFLLNLPMFGREPFHPDVDKLVGDFTSSLMLDVDFTEAHTPAQRARVMQEALHTSAEHATYSGLSVLRDLSRHHGSPSLAPFVFTSALGLGDLFAGDVTDQFGTPVWHISQGPQVLLDAQVTPFDGGLLVNWDVREDAFRPGVIDAMFAYQLAELERLAADDAAWDAADPPAVPPAQRAVRDAVNDTGARRSDDALHDGFFRTAAHTPDATAVIGSTGTLTYAELRERVLAVTGALQVAGIKPGDTVAVMGPKCADQVTALLAIHAAGAVYVPIGADQPADRADSILQTAGVRMALACGDEPPTFLPALTIAEAVRVGSRVHGVTPATVEPDRVAYVLFTSGSTGAPKGVEVTHAAAMNTLEFINDHFGIGPSDRSLALSTLEGDLSVLDVFGMLRAGGSLVVVDEAQRRDPDSWARLIAEHSVTVLHWMPGWLEMLLEVGGALPSVRVVPTGGDWVRTEMVRELRRAAPGVRFAGLGGATETAIHNTICEPGELPREWSAVPFGRPLPNNACRVVAADGADCPDWVPGELWVGGRGIARGYRGRPDLTAERFVVHDGRTWYRTGDLVRYLPDGQIDFVGRADHRVKISGYRIELGEVEAALRRIAGVEAAVAAVLTAPGDGRGEQLAAIVRASSPAVTVDELTRRMAELVPPHMVPSHIALVEAVPFTVGGKIDRRAVTAELTRSMAERANAQAPTYRVPSTALERALADIVSTVLDRDSVGADDDFFELGGDSVLATQAVARIREWLDSPGVMVTDIFAARRVGALARRLVDHESGSDRLEGVAELYLEVADMNSADVASALHSTSAQASR</sequence>